<keyword id="KW-0963">Cytoplasm</keyword>
<keyword id="KW-0342">GTP-binding</keyword>
<keyword id="KW-0547">Nucleotide-binding</keyword>
<keyword id="KW-0597">Phosphoprotein</keyword>
<keyword id="KW-0648">Protein biosynthesis</keyword>
<keyword id="KW-1185">Reference proteome</keyword>
<keyword id="KW-0677">Repeat</keyword>
<feature type="chain" id="PRO_0000091485" description="Eukaryotic peptide chain release factor GTP-binding subunit">
    <location>
        <begin position="1"/>
        <end position="701"/>
    </location>
</feature>
<feature type="domain" description="tr-type G" evidence="2">
    <location>
        <begin position="276"/>
        <end position="501"/>
    </location>
</feature>
<feature type="region of interest" description="Disordered" evidence="3">
    <location>
        <begin position="1"/>
        <end position="63"/>
    </location>
</feature>
<feature type="region of interest" description="Several sort of repeats">
    <location>
        <begin position="20"/>
        <end position="131"/>
    </location>
</feature>
<feature type="region of interest" description="Disordered" evidence="3">
    <location>
        <begin position="91"/>
        <end position="124"/>
    </location>
</feature>
<feature type="region of interest" description="Charged">
    <location>
        <begin position="132"/>
        <end position="271"/>
    </location>
</feature>
<feature type="region of interest" description="Disordered" evidence="3">
    <location>
        <begin position="164"/>
        <end position="259"/>
    </location>
</feature>
<feature type="region of interest" description="G1" evidence="2">
    <location>
        <begin position="285"/>
        <end position="292"/>
    </location>
</feature>
<feature type="region of interest" description="G2" evidence="2">
    <location>
        <begin position="341"/>
        <end position="345"/>
    </location>
</feature>
<feature type="region of interest" description="G3" evidence="2">
    <location>
        <begin position="362"/>
        <end position="365"/>
    </location>
</feature>
<feature type="region of interest" description="G4" evidence="2">
    <location>
        <begin position="424"/>
        <end position="427"/>
    </location>
</feature>
<feature type="region of interest" description="G5" evidence="2">
    <location>
        <begin position="465"/>
        <end position="467"/>
    </location>
</feature>
<feature type="compositionally biased region" description="Polar residues" evidence="3">
    <location>
        <begin position="1"/>
        <end position="25"/>
    </location>
</feature>
<feature type="compositionally biased region" description="Low complexity" evidence="3">
    <location>
        <begin position="26"/>
        <end position="40"/>
    </location>
</feature>
<feature type="compositionally biased region" description="Polar residues" evidence="3">
    <location>
        <begin position="41"/>
        <end position="54"/>
    </location>
</feature>
<feature type="compositionally biased region" description="Basic and acidic residues" evidence="3">
    <location>
        <begin position="170"/>
        <end position="224"/>
    </location>
</feature>
<feature type="compositionally biased region" description="Polar residues" evidence="3">
    <location>
        <begin position="228"/>
        <end position="252"/>
    </location>
</feature>
<feature type="binding site" evidence="1">
    <location>
        <begin position="285"/>
        <end position="292"/>
    </location>
    <ligand>
        <name>GTP</name>
        <dbReference type="ChEBI" id="CHEBI:37565"/>
    </ligand>
</feature>
<feature type="binding site" evidence="1">
    <location>
        <begin position="362"/>
        <end position="366"/>
    </location>
    <ligand>
        <name>GTP</name>
        <dbReference type="ChEBI" id="CHEBI:37565"/>
    </ligand>
</feature>
<feature type="binding site" evidence="1">
    <location>
        <begin position="424"/>
        <end position="427"/>
    </location>
    <ligand>
        <name>GTP</name>
        <dbReference type="ChEBI" id="CHEBI:37565"/>
    </ligand>
</feature>
<feature type="modified residue" description="Phosphothreonine" evidence="1">
    <location>
        <position position="359"/>
    </location>
</feature>
<feature type="sequence conflict" description="In Ref. 1; BAB12682." evidence="4" ref="1">
    <original>N</original>
    <variation>S</variation>
    <location>
        <position position="107"/>
    </location>
</feature>
<feature type="sequence conflict" description="In Ref. 1; BAB12682." evidence="4" ref="1">
    <original>E</original>
    <variation>Q</variation>
    <location>
        <position position="185"/>
    </location>
</feature>
<feature type="sequence conflict" description="In Ref. 1; BAB12682." evidence="4" ref="1">
    <original>A</original>
    <variation>T</variation>
    <location>
        <position position="206"/>
    </location>
</feature>
<feature type="sequence conflict" description="In Ref. 1; BAB12682." evidence="4" ref="1">
    <original>V</original>
    <variation>A</variation>
    <location>
        <position position="229"/>
    </location>
</feature>
<feature type="sequence conflict" description="In Ref. 1; BAB12682." evidence="4" ref="1">
    <original>I</original>
    <variation>V</variation>
    <location>
        <position position="460"/>
    </location>
</feature>
<feature type="sequence conflict" description="In Ref. 1; BAB12682." evidence="4" ref="1">
    <original>M</original>
    <variation>V</variation>
    <location>
        <position position="499"/>
    </location>
</feature>
<feature type="sequence conflict" description="In Ref. 1; BAB12682." evidence="4" ref="1">
    <original>A</original>
    <variation>T</variation>
    <location>
        <position position="550"/>
    </location>
</feature>
<feature type="sequence conflict" description="In Ref. 1; BAB12682." evidence="4" ref="1">
    <original>F</original>
    <variation>Y</variation>
    <location>
        <position position="563"/>
    </location>
</feature>
<feature type="sequence conflict" description="In Ref. 1; BAB12682." evidence="4" ref="1">
    <original>I</original>
    <variation>V</variation>
    <location>
        <position position="662"/>
    </location>
</feature>
<feature type="sequence conflict" description="In Ref. 1; BAB12682." evidence="4" ref="1">
    <original>N</original>
    <variation>S</variation>
    <location>
        <position position="666"/>
    </location>
</feature>
<name>ERF3_DEBHA</name>
<sequence length="701" mass="77267">MSDDQQYNQDKLSQDFQNTSIGSGEQQQQSYQQYQQQPQQNNFNANSAPTFTPSGQQGGYQGGYQGGYQGGYQNYSQGGYQNYNQGYQNYNQGYQGYQNNNRGGYNNYNNRGGYNNYNNYNQQDQQPVQNQGMSLADFQKQQNAQANLNKPKKTLKLASSSGIKLANAKKAPETESKEATPAATEKEATPAATEKEATPAATEKEATPAATEKETTPAPAKKEATPASVKSESKPASKSTSKVATKESTPVTSDKVIQEQVDEVDEEVVKDMFGGKDHVSIIFMGHVDAGKSTMGGNILYLTGSVDKRTVDKYEREAKDAGRQGWYLSWVMDTNKEERSDGKTIEVGKAYFETEKRRYTILDAPGHKMYVSEMIGGASQADVGILVISARKGEYETGFEKGGQTREHALLAKTQGVNKIIVVVNKMDDPTVGWAEDRYKDCITKLGTFLKGIGYAKDDIIFMPVSGYTGAGIKDRVNPKDCPWYSGPSLLEFLDNMKTMQRHINGPFMLPISGKMKDMGTIIEGKIESGHIKKGGNLLLMPNKASIEVVAIFNETEQECDAAFCGEQVRLKIKGVEEEDLAPGYVLTSPLKPIKTITRFEAQIAIVELKSILSNGFSCVMHLHTAIEEVTFIELKHKLEKGTNRKSKKPPAFAKKGMKVIAILETNESVCAETYADYPQLGRFTLRDQGTTIAIGKITKVL</sequence>
<comment type="function">
    <text>Involved in translation termination. Stimulates the activity of ERF1. Binds guanine nucleotides.</text>
</comment>
<comment type="subcellular location">
    <subcellularLocation>
        <location evidence="4">Cytoplasm</location>
    </subcellularLocation>
</comment>
<comment type="similarity">
    <text evidence="2">Belongs to the TRAFAC class translation factor GTPase superfamily. Classic translation factor GTPase family. ERF3 subfamily.</text>
</comment>
<evidence type="ECO:0000250" key="1"/>
<evidence type="ECO:0000255" key="2">
    <source>
        <dbReference type="PROSITE-ProRule" id="PRU01059"/>
    </source>
</evidence>
<evidence type="ECO:0000256" key="3">
    <source>
        <dbReference type="SAM" id="MobiDB-lite"/>
    </source>
</evidence>
<evidence type="ECO:0000305" key="4"/>
<organism>
    <name type="scientific">Debaryomyces hansenii (strain ATCC 36239 / CBS 767 / BCRC 21394 / JCM 1990 / NBRC 0083 / IGC 2968)</name>
    <name type="common">Yeast</name>
    <name type="synonym">Torulaspora hansenii</name>
    <dbReference type="NCBI Taxonomy" id="284592"/>
    <lineage>
        <taxon>Eukaryota</taxon>
        <taxon>Fungi</taxon>
        <taxon>Dikarya</taxon>
        <taxon>Ascomycota</taxon>
        <taxon>Saccharomycotina</taxon>
        <taxon>Pichiomycetes</taxon>
        <taxon>Debaryomycetaceae</taxon>
        <taxon>Debaryomyces</taxon>
    </lineage>
</organism>
<accession>Q9HGI6</accession>
<accession>Q6BWQ4</accession>
<proteinExistence type="inferred from homology"/>
<dbReference type="EMBL" id="AB039751">
    <property type="protein sequence ID" value="BAB12682.3"/>
    <property type="molecule type" value="Genomic_DNA"/>
</dbReference>
<dbReference type="EMBL" id="CR382134">
    <property type="protein sequence ID" value="CAG85369.1"/>
    <property type="molecule type" value="Genomic_DNA"/>
</dbReference>
<dbReference type="RefSeq" id="XP_457365.1">
    <property type="nucleotide sequence ID" value="XM_457365.1"/>
</dbReference>
<dbReference type="SMR" id="Q9HGI6"/>
<dbReference type="FunCoup" id="Q9HGI6">
    <property type="interactions" value="954"/>
</dbReference>
<dbReference type="STRING" id="284592.Q9HGI6"/>
<dbReference type="GeneID" id="2913288"/>
<dbReference type="KEGG" id="dha:DEHA2B09526g"/>
<dbReference type="VEuPathDB" id="FungiDB:DEHA2B09526g"/>
<dbReference type="eggNOG" id="KOG0459">
    <property type="taxonomic scope" value="Eukaryota"/>
</dbReference>
<dbReference type="HOGENOM" id="CLU_007265_3_8_1"/>
<dbReference type="InParanoid" id="Q9HGI6"/>
<dbReference type="OMA" id="TNESVCA"/>
<dbReference type="OrthoDB" id="342024at2759"/>
<dbReference type="Proteomes" id="UP000000599">
    <property type="component" value="Chromosome B"/>
</dbReference>
<dbReference type="GO" id="GO:0005829">
    <property type="term" value="C:cytosol"/>
    <property type="evidence" value="ECO:0007669"/>
    <property type="project" value="GOC"/>
</dbReference>
<dbReference type="GO" id="GO:0018444">
    <property type="term" value="C:translation release factor complex"/>
    <property type="evidence" value="ECO:0007669"/>
    <property type="project" value="EnsemblFungi"/>
</dbReference>
<dbReference type="GO" id="GO:0005525">
    <property type="term" value="F:GTP binding"/>
    <property type="evidence" value="ECO:0007669"/>
    <property type="project" value="UniProtKB-KW"/>
</dbReference>
<dbReference type="GO" id="GO:0003924">
    <property type="term" value="F:GTPase activity"/>
    <property type="evidence" value="ECO:0007669"/>
    <property type="project" value="EnsemblFungi"/>
</dbReference>
<dbReference type="GO" id="GO:0003747">
    <property type="term" value="F:translation release factor activity"/>
    <property type="evidence" value="ECO:0007669"/>
    <property type="project" value="EnsemblFungi"/>
</dbReference>
<dbReference type="GO" id="GO:0002184">
    <property type="term" value="P:cytoplasmic translational termination"/>
    <property type="evidence" value="ECO:0007669"/>
    <property type="project" value="EnsemblFungi"/>
</dbReference>
<dbReference type="GO" id="GO:0000288">
    <property type="term" value="P:nuclear-transcribed mRNA catabolic process, deadenylation-dependent decay"/>
    <property type="evidence" value="ECO:0007669"/>
    <property type="project" value="InterPro"/>
</dbReference>
<dbReference type="CDD" id="cd01883">
    <property type="entry name" value="EF1_alpha"/>
    <property type="match status" value="1"/>
</dbReference>
<dbReference type="CDD" id="cd03704">
    <property type="entry name" value="eRF3_C_III"/>
    <property type="match status" value="1"/>
</dbReference>
<dbReference type="CDD" id="cd04089">
    <property type="entry name" value="eRF3_II"/>
    <property type="match status" value="1"/>
</dbReference>
<dbReference type="FunFam" id="2.40.30.10:FF:000017">
    <property type="entry name" value="Eukaryotic peptide chain release factor GTP-binding subunit"/>
    <property type="match status" value="1"/>
</dbReference>
<dbReference type="FunFam" id="3.40.50.300:FF:000503">
    <property type="entry name" value="Peptide chain release factor subunit 3"/>
    <property type="match status" value="1"/>
</dbReference>
<dbReference type="FunFam" id="2.40.30.10:FF:000061">
    <property type="entry name" value="Translation release factor eRF3, putative"/>
    <property type="match status" value="1"/>
</dbReference>
<dbReference type="Gene3D" id="3.40.50.300">
    <property type="entry name" value="P-loop containing nucleotide triphosphate hydrolases"/>
    <property type="match status" value="1"/>
</dbReference>
<dbReference type="Gene3D" id="2.40.30.10">
    <property type="entry name" value="Translation factors"/>
    <property type="match status" value="2"/>
</dbReference>
<dbReference type="InterPro" id="IPR004161">
    <property type="entry name" value="EFTu-like_2"/>
</dbReference>
<dbReference type="InterPro" id="IPR031157">
    <property type="entry name" value="G_TR_CS"/>
</dbReference>
<dbReference type="InterPro" id="IPR054696">
    <property type="entry name" value="GTP-eEF1A_C"/>
</dbReference>
<dbReference type="InterPro" id="IPR027417">
    <property type="entry name" value="P-loop_NTPase"/>
</dbReference>
<dbReference type="InterPro" id="IPR003285">
    <property type="entry name" value="Sup35"/>
</dbReference>
<dbReference type="InterPro" id="IPR000795">
    <property type="entry name" value="T_Tr_GTP-bd_dom"/>
</dbReference>
<dbReference type="InterPro" id="IPR050100">
    <property type="entry name" value="TRAFAC_GTPase_members"/>
</dbReference>
<dbReference type="InterPro" id="IPR009000">
    <property type="entry name" value="Transl_B-barrel_sf"/>
</dbReference>
<dbReference type="InterPro" id="IPR009001">
    <property type="entry name" value="Transl_elong_EF1A/Init_IF2_C"/>
</dbReference>
<dbReference type="PANTHER" id="PTHR23115">
    <property type="entry name" value="TRANSLATION FACTOR"/>
    <property type="match status" value="1"/>
</dbReference>
<dbReference type="Pfam" id="PF22594">
    <property type="entry name" value="GTP-eEF1A_C"/>
    <property type="match status" value="1"/>
</dbReference>
<dbReference type="Pfam" id="PF00009">
    <property type="entry name" value="GTP_EFTU"/>
    <property type="match status" value="1"/>
</dbReference>
<dbReference type="Pfam" id="PF03144">
    <property type="entry name" value="GTP_EFTU_D2"/>
    <property type="match status" value="1"/>
</dbReference>
<dbReference type="PRINTS" id="PR00315">
    <property type="entry name" value="ELONGATNFCT"/>
</dbReference>
<dbReference type="PRINTS" id="PR01343">
    <property type="entry name" value="YEASTERF"/>
</dbReference>
<dbReference type="SUPFAM" id="SSF50465">
    <property type="entry name" value="EF-Tu/eEF-1alpha/eIF2-gamma C-terminal domain"/>
    <property type="match status" value="1"/>
</dbReference>
<dbReference type="SUPFAM" id="SSF52540">
    <property type="entry name" value="P-loop containing nucleoside triphosphate hydrolases"/>
    <property type="match status" value="1"/>
</dbReference>
<dbReference type="SUPFAM" id="SSF50447">
    <property type="entry name" value="Translation proteins"/>
    <property type="match status" value="1"/>
</dbReference>
<dbReference type="PROSITE" id="PS00301">
    <property type="entry name" value="G_TR_1"/>
    <property type="match status" value="1"/>
</dbReference>
<dbReference type="PROSITE" id="PS51722">
    <property type="entry name" value="G_TR_2"/>
    <property type="match status" value="1"/>
</dbReference>
<reference key="1">
    <citation type="journal article" date="2001" name="Mol. Cell">
        <title>Yeast [PSI+] 'prions' that are crosstransmissible and susceptible beyond a species barrier through a quasi-prion state.</title>
        <authorList>
            <person name="Nakayashiki T."/>
            <person name="Ebihara K."/>
            <person name="Bannai H."/>
            <person name="Nakamura Y."/>
        </authorList>
    </citation>
    <scope>NUCLEOTIDE SEQUENCE [GENOMIC DNA]</scope>
</reference>
<reference key="2">
    <citation type="journal article" date="2004" name="Nature">
        <title>Genome evolution in yeasts.</title>
        <authorList>
            <person name="Dujon B."/>
            <person name="Sherman D."/>
            <person name="Fischer G."/>
            <person name="Durrens P."/>
            <person name="Casaregola S."/>
            <person name="Lafontaine I."/>
            <person name="de Montigny J."/>
            <person name="Marck C."/>
            <person name="Neuveglise C."/>
            <person name="Talla E."/>
            <person name="Goffard N."/>
            <person name="Frangeul L."/>
            <person name="Aigle M."/>
            <person name="Anthouard V."/>
            <person name="Babour A."/>
            <person name="Barbe V."/>
            <person name="Barnay S."/>
            <person name="Blanchin S."/>
            <person name="Beckerich J.-M."/>
            <person name="Beyne E."/>
            <person name="Bleykasten C."/>
            <person name="Boisrame A."/>
            <person name="Boyer J."/>
            <person name="Cattolico L."/>
            <person name="Confanioleri F."/>
            <person name="de Daruvar A."/>
            <person name="Despons L."/>
            <person name="Fabre E."/>
            <person name="Fairhead C."/>
            <person name="Ferry-Dumazet H."/>
            <person name="Groppi A."/>
            <person name="Hantraye F."/>
            <person name="Hennequin C."/>
            <person name="Jauniaux N."/>
            <person name="Joyet P."/>
            <person name="Kachouri R."/>
            <person name="Kerrest A."/>
            <person name="Koszul R."/>
            <person name="Lemaire M."/>
            <person name="Lesur I."/>
            <person name="Ma L."/>
            <person name="Muller H."/>
            <person name="Nicaud J.-M."/>
            <person name="Nikolski M."/>
            <person name="Oztas S."/>
            <person name="Ozier-Kalogeropoulos O."/>
            <person name="Pellenz S."/>
            <person name="Potier S."/>
            <person name="Richard G.-F."/>
            <person name="Straub M.-L."/>
            <person name="Suleau A."/>
            <person name="Swennen D."/>
            <person name="Tekaia F."/>
            <person name="Wesolowski-Louvel M."/>
            <person name="Westhof E."/>
            <person name="Wirth B."/>
            <person name="Zeniou-Meyer M."/>
            <person name="Zivanovic Y."/>
            <person name="Bolotin-Fukuhara M."/>
            <person name="Thierry A."/>
            <person name="Bouchier C."/>
            <person name="Caudron B."/>
            <person name="Scarpelli C."/>
            <person name="Gaillardin C."/>
            <person name="Weissenbach J."/>
            <person name="Wincker P."/>
            <person name="Souciet J.-L."/>
        </authorList>
    </citation>
    <scope>NUCLEOTIDE SEQUENCE [LARGE SCALE GENOMIC DNA]</scope>
    <source>
        <strain>ATCC 36239 / CBS 767 / BCRC 21394 / JCM 1990 / NBRC 0083 / IGC 2968</strain>
    </source>
</reference>
<protein>
    <recommendedName>
        <fullName>Eukaryotic peptide chain release factor GTP-binding subunit</fullName>
    </recommendedName>
    <alternativeName>
        <fullName>ERF-3</fullName>
        <shortName>ERF3</shortName>
    </alternativeName>
    <alternativeName>
        <fullName>ERF2</fullName>
    </alternativeName>
    <alternativeName>
        <fullName>Polypeptide release factor 3</fullName>
    </alternativeName>
    <alternativeName>
        <fullName>Translation release factor 3</fullName>
    </alternativeName>
</protein>
<gene>
    <name type="primary">SUP35</name>
    <name type="ordered locus">DEHA2B09526g</name>
</gene>